<organism>
    <name type="scientific">Acidithiobacillus ferrooxidans (strain ATCC 53993 / BNL-5-31)</name>
    <name type="common">Leptospirillum ferrooxidans (ATCC 53993)</name>
    <dbReference type="NCBI Taxonomy" id="380394"/>
    <lineage>
        <taxon>Bacteria</taxon>
        <taxon>Pseudomonadati</taxon>
        <taxon>Pseudomonadota</taxon>
        <taxon>Acidithiobacillia</taxon>
        <taxon>Acidithiobacillales</taxon>
        <taxon>Acidithiobacillaceae</taxon>
        <taxon>Acidithiobacillus</taxon>
    </lineage>
</organism>
<evidence type="ECO:0000255" key="1">
    <source>
        <dbReference type="HAMAP-Rule" id="MF_01341"/>
    </source>
</evidence>
<evidence type="ECO:0000256" key="2">
    <source>
        <dbReference type="SAM" id="MobiDB-lite"/>
    </source>
</evidence>
<evidence type="ECO:0000305" key="3"/>
<comment type="function">
    <text evidence="1">Binds to the 23S rRNA.</text>
</comment>
<comment type="subunit">
    <text evidence="1">Part of the 50S ribosomal subunit.</text>
</comment>
<comment type="similarity">
    <text evidence="1">Belongs to the universal ribosomal protein uL15 family.</text>
</comment>
<dbReference type="EMBL" id="CP001132">
    <property type="protein sequence ID" value="ACH82770.1"/>
    <property type="molecule type" value="Genomic_DNA"/>
</dbReference>
<dbReference type="RefSeq" id="WP_012536095.1">
    <property type="nucleotide sequence ID" value="NC_011206.1"/>
</dbReference>
<dbReference type="SMR" id="B5ELZ8"/>
<dbReference type="GeneID" id="65279724"/>
<dbReference type="KEGG" id="afe:Lferr_0516"/>
<dbReference type="eggNOG" id="COG0200">
    <property type="taxonomic scope" value="Bacteria"/>
</dbReference>
<dbReference type="HOGENOM" id="CLU_055188_4_2_6"/>
<dbReference type="GO" id="GO:0022625">
    <property type="term" value="C:cytosolic large ribosomal subunit"/>
    <property type="evidence" value="ECO:0007669"/>
    <property type="project" value="TreeGrafter"/>
</dbReference>
<dbReference type="GO" id="GO:0019843">
    <property type="term" value="F:rRNA binding"/>
    <property type="evidence" value="ECO:0007669"/>
    <property type="project" value="UniProtKB-UniRule"/>
</dbReference>
<dbReference type="GO" id="GO:0003735">
    <property type="term" value="F:structural constituent of ribosome"/>
    <property type="evidence" value="ECO:0007669"/>
    <property type="project" value="InterPro"/>
</dbReference>
<dbReference type="GO" id="GO:0006412">
    <property type="term" value="P:translation"/>
    <property type="evidence" value="ECO:0007669"/>
    <property type="project" value="UniProtKB-UniRule"/>
</dbReference>
<dbReference type="Gene3D" id="3.100.10.10">
    <property type="match status" value="1"/>
</dbReference>
<dbReference type="HAMAP" id="MF_01341">
    <property type="entry name" value="Ribosomal_uL15"/>
    <property type="match status" value="1"/>
</dbReference>
<dbReference type="InterPro" id="IPR030878">
    <property type="entry name" value="Ribosomal_uL15"/>
</dbReference>
<dbReference type="InterPro" id="IPR021131">
    <property type="entry name" value="Ribosomal_uL15/eL18"/>
</dbReference>
<dbReference type="InterPro" id="IPR036227">
    <property type="entry name" value="Ribosomal_uL15/eL18_sf"/>
</dbReference>
<dbReference type="InterPro" id="IPR005749">
    <property type="entry name" value="Ribosomal_uL15_bac-type"/>
</dbReference>
<dbReference type="InterPro" id="IPR001196">
    <property type="entry name" value="Ribosomal_uL15_CS"/>
</dbReference>
<dbReference type="NCBIfam" id="TIGR01071">
    <property type="entry name" value="rplO_bact"/>
    <property type="match status" value="1"/>
</dbReference>
<dbReference type="PANTHER" id="PTHR12934">
    <property type="entry name" value="50S RIBOSOMAL PROTEIN L15"/>
    <property type="match status" value="1"/>
</dbReference>
<dbReference type="PANTHER" id="PTHR12934:SF11">
    <property type="entry name" value="LARGE RIBOSOMAL SUBUNIT PROTEIN UL15M"/>
    <property type="match status" value="1"/>
</dbReference>
<dbReference type="Pfam" id="PF00828">
    <property type="entry name" value="Ribosomal_L27A"/>
    <property type="match status" value="1"/>
</dbReference>
<dbReference type="SUPFAM" id="SSF52080">
    <property type="entry name" value="Ribosomal proteins L15p and L18e"/>
    <property type="match status" value="1"/>
</dbReference>
<dbReference type="PROSITE" id="PS00475">
    <property type="entry name" value="RIBOSOMAL_L15"/>
    <property type="match status" value="1"/>
</dbReference>
<protein>
    <recommendedName>
        <fullName evidence="1">Large ribosomal subunit protein uL15</fullName>
    </recommendedName>
    <alternativeName>
        <fullName evidence="3">50S ribosomal protein L15</fullName>
    </alternativeName>
</protein>
<gene>
    <name evidence="1" type="primary">rplO</name>
    <name type="ordered locus">Lferr_0516</name>
</gene>
<reference key="1">
    <citation type="submission" date="2008-08" db="EMBL/GenBank/DDBJ databases">
        <title>Complete sequence of Acidithiobacillus ferrooxidans ATCC 53993.</title>
        <authorList>
            <person name="Lucas S."/>
            <person name="Copeland A."/>
            <person name="Lapidus A."/>
            <person name="Glavina del Rio T."/>
            <person name="Dalin E."/>
            <person name="Tice H."/>
            <person name="Bruce D."/>
            <person name="Goodwin L."/>
            <person name="Pitluck S."/>
            <person name="Sims D."/>
            <person name="Brettin T."/>
            <person name="Detter J.C."/>
            <person name="Han C."/>
            <person name="Kuske C.R."/>
            <person name="Larimer F."/>
            <person name="Land M."/>
            <person name="Hauser L."/>
            <person name="Kyrpides N."/>
            <person name="Lykidis A."/>
            <person name="Borole A.P."/>
        </authorList>
    </citation>
    <scope>NUCLEOTIDE SEQUENCE [LARGE SCALE GENOMIC DNA]</scope>
    <source>
        <strain>ATCC 53993 / BNL-5-31</strain>
    </source>
</reference>
<accession>B5ELZ8</accession>
<feature type="chain" id="PRO_1000142762" description="Large ribosomal subunit protein uL15">
    <location>
        <begin position="1"/>
        <end position="145"/>
    </location>
</feature>
<feature type="region of interest" description="Disordered" evidence="2">
    <location>
        <begin position="1"/>
        <end position="52"/>
    </location>
</feature>
<feature type="compositionally biased region" description="Gly residues" evidence="2">
    <location>
        <begin position="21"/>
        <end position="31"/>
    </location>
</feature>
<keyword id="KW-0687">Ribonucleoprotein</keyword>
<keyword id="KW-0689">Ribosomal protein</keyword>
<keyword id="KW-0694">RNA-binding</keyword>
<keyword id="KW-0699">rRNA-binding</keyword>
<sequence length="145" mass="15317">MKLNTIAPAEGSKKDRRRVGRGIGSGFGKTAGRGHKGQHARSGGYHKVGFEGGQMPLQRRIPKRGFRNTLGVRVVEVALSQLESAAIDGVVDLEGLLLRRIVRGSPDAVKVILTGEITQGLTVRGLRVSAGARAAIEKAGGKVED</sequence>
<name>RL15_ACIF5</name>
<proteinExistence type="inferred from homology"/>